<sequence>MSSVVVVGAQWGDEGKGKITDFLAQKADLVARYQGGNNAGHTVVVKGKEFKLHLIPSGILYPDKTCIIGNGVVIDPGVLIEELKYLESEGISADNLRISGRAHVIMPYHRRLDEVEEERRGANKIGTTKRGIGPCYVDKIARVGIRMADLLDPEEFRARLEQNVAAKNELLEKIYGVDGFDAQAIFDEYRAYAERLQAYITDTSVLLDDARKEGKNILFEGAQGTLLDIDHGTYPFVTSSHPIGGGATVGAGIGPTTINKILGVVKAYTTRVGEGPFPTELNDEMGDLIRKAGHEFGTTTGRPRRCGWFDAVIMRYSVRVSGLTCMAVTKLDVLDQLPVIKICVGYRYQDEVITHFPESLKKLAQCEPVYEEMPGWMSDTTGCRTMEELPEKARRYVKRLEELCGCPALLLAVGPDREQTIELGEAF</sequence>
<accession>B0TA52</accession>
<evidence type="ECO:0000255" key="1">
    <source>
        <dbReference type="HAMAP-Rule" id="MF_00011"/>
    </source>
</evidence>
<feature type="chain" id="PRO_1000089300" description="Adenylosuccinate synthetase">
    <location>
        <begin position="1"/>
        <end position="427"/>
    </location>
</feature>
<feature type="active site" description="Proton acceptor" evidence="1">
    <location>
        <position position="13"/>
    </location>
</feature>
<feature type="active site" description="Proton donor" evidence="1">
    <location>
        <position position="41"/>
    </location>
</feature>
<feature type="binding site" evidence="1">
    <location>
        <begin position="12"/>
        <end position="18"/>
    </location>
    <ligand>
        <name>GTP</name>
        <dbReference type="ChEBI" id="CHEBI:37565"/>
    </ligand>
</feature>
<feature type="binding site" description="in other chain" evidence="1">
    <location>
        <begin position="13"/>
        <end position="16"/>
    </location>
    <ligand>
        <name>IMP</name>
        <dbReference type="ChEBI" id="CHEBI:58053"/>
        <note>ligand shared between dimeric partners</note>
    </ligand>
</feature>
<feature type="binding site" evidence="1">
    <location>
        <position position="13"/>
    </location>
    <ligand>
        <name>Mg(2+)</name>
        <dbReference type="ChEBI" id="CHEBI:18420"/>
    </ligand>
</feature>
<feature type="binding site" description="in other chain" evidence="1">
    <location>
        <begin position="38"/>
        <end position="41"/>
    </location>
    <ligand>
        <name>IMP</name>
        <dbReference type="ChEBI" id="CHEBI:58053"/>
        <note>ligand shared between dimeric partners</note>
    </ligand>
</feature>
<feature type="binding site" evidence="1">
    <location>
        <begin position="40"/>
        <end position="42"/>
    </location>
    <ligand>
        <name>GTP</name>
        <dbReference type="ChEBI" id="CHEBI:37565"/>
    </ligand>
</feature>
<feature type="binding site" evidence="1">
    <location>
        <position position="40"/>
    </location>
    <ligand>
        <name>Mg(2+)</name>
        <dbReference type="ChEBI" id="CHEBI:18420"/>
    </ligand>
</feature>
<feature type="binding site" description="in other chain" evidence="1">
    <location>
        <position position="128"/>
    </location>
    <ligand>
        <name>IMP</name>
        <dbReference type="ChEBI" id="CHEBI:58053"/>
        <note>ligand shared between dimeric partners</note>
    </ligand>
</feature>
<feature type="binding site" evidence="1">
    <location>
        <position position="142"/>
    </location>
    <ligand>
        <name>IMP</name>
        <dbReference type="ChEBI" id="CHEBI:58053"/>
        <note>ligand shared between dimeric partners</note>
    </ligand>
</feature>
<feature type="binding site" description="in other chain" evidence="1">
    <location>
        <position position="223"/>
    </location>
    <ligand>
        <name>IMP</name>
        <dbReference type="ChEBI" id="CHEBI:58053"/>
        <note>ligand shared between dimeric partners</note>
    </ligand>
</feature>
<feature type="binding site" description="in other chain" evidence="1">
    <location>
        <position position="238"/>
    </location>
    <ligand>
        <name>IMP</name>
        <dbReference type="ChEBI" id="CHEBI:58053"/>
        <note>ligand shared between dimeric partners</note>
    </ligand>
</feature>
<feature type="binding site" evidence="1">
    <location>
        <begin position="298"/>
        <end position="304"/>
    </location>
    <ligand>
        <name>substrate</name>
    </ligand>
</feature>
<feature type="binding site" description="in other chain" evidence="1">
    <location>
        <position position="302"/>
    </location>
    <ligand>
        <name>IMP</name>
        <dbReference type="ChEBI" id="CHEBI:58053"/>
        <note>ligand shared between dimeric partners</note>
    </ligand>
</feature>
<feature type="binding site" evidence="1">
    <location>
        <position position="304"/>
    </location>
    <ligand>
        <name>GTP</name>
        <dbReference type="ChEBI" id="CHEBI:37565"/>
    </ligand>
</feature>
<feature type="binding site" evidence="1">
    <location>
        <begin position="330"/>
        <end position="332"/>
    </location>
    <ligand>
        <name>GTP</name>
        <dbReference type="ChEBI" id="CHEBI:37565"/>
    </ligand>
</feature>
<feature type="binding site" evidence="1">
    <location>
        <begin position="412"/>
        <end position="414"/>
    </location>
    <ligand>
        <name>GTP</name>
        <dbReference type="ChEBI" id="CHEBI:37565"/>
    </ligand>
</feature>
<proteinExistence type="inferred from homology"/>
<organism>
    <name type="scientific">Heliobacterium modesticaldum (strain ATCC 51547 / Ice1)</name>
    <dbReference type="NCBI Taxonomy" id="498761"/>
    <lineage>
        <taxon>Bacteria</taxon>
        <taxon>Bacillati</taxon>
        <taxon>Bacillota</taxon>
        <taxon>Clostridia</taxon>
        <taxon>Eubacteriales</taxon>
        <taxon>Heliobacteriaceae</taxon>
        <taxon>Heliomicrobium</taxon>
    </lineage>
</organism>
<protein>
    <recommendedName>
        <fullName evidence="1">Adenylosuccinate synthetase</fullName>
        <shortName evidence="1">AMPSase</shortName>
        <shortName evidence="1">AdSS</shortName>
        <ecNumber evidence="1">6.3.4.4</ecNumber>
    </recommendedName>
    <alternativeName>
        <fullName evidence="1">IMP--aspartate ligase</fullName>
    </alternativeName>
</protein>
<keyword id="KW-0963">Cytoplasm</keyword>
<keyword id="KW-0342">GTP-binding</keyword>
<keyword id="KW-0436">Ligase</keyword>
<keyword id="KW-0460">Magnesium</keyword>
<keyword id="KW-0479">Metal-binding</keyword>
<keyword id="KW-0547">Nucleotide-binding</keyword>
<keyword id="KW-0658">Purine biosynthesis</keyword>
<keyword id="KW-1185">Reference proteome</keyword>
<reference key="1">
    <citation type="journal article" date="2008" name="J. Bacteriol.">
        <title>The genome of Heliobacterium modesticaldum, a phototrophic representative of the Firmicutes containing the simplest photosynthetic apparatus.</title>
        <authorList>
            <person name="Sattley W.M."/>
            <person name="Madigan M.T."/>
            <person name="Swingley W.D."/>
            <person name="Cheung P.C."/>
            <person name="Clocksin K.M."/>
            <person name="Conrad A.L."/>
            <person name="Dejesa L.C."/>
            <person name="Honchak B.M."/>
            <person name="Jung D.O."/>
            <person name="Karbach L.E."/>
            <person name="Kurdoglu A."/>
            <person name="Lahiri S."/>
            <person name="Mastrian S.D."/>
            <person name="Page L.E."/>
            <person name="Taylor H.L."/>
            <person name="Wang Z.T."/>
            <person name="Raymond J."/>
            <person name="Chen M."/>
            <person name="Blankenship R.E."/>
            <person name="Touchman J.W."/>
        </authorList>
    </citation>
    <scope>NUCLEOTIDE SEQUENCE [LARGE SCALE GENOMIC DNA]</scope>
    <source>
        <strain>ATCC 51547 / Ice1</strain>
    </source>
</reference>
<dbReference type="EC" id="6.3.4.4" evidence="1"/>
<dbReference type="EMBL" id="CP000930">
    <property type="protein sequence ID" value="ABZ83589.1"/>
    <property type="molecule type" value="Genomic_DNA"/>
</dbReference>
<dbReference type="RefSeq" id="WP_012282117.1">
    <property type="nucleotide sequence ID" value="NC_010337.2"/>
</dbReference>
<dbReference type="SMR" id="B0TA52"/>
<dbReference type="STRING" id="498761.HM1_0977"/>
<dbReference type="KEGG" id="hmo:HM1_0977"/>
<dbReference type="eggNOG" id="COG0104">
    <property type="taxonomic scope" value="Bacteria"/>
</dbReference>
<dbReference type="HOGENOM" id="CLU_029848_0_0_9"/>
<dbReference type="OrthoDB" id="9807553at2"/>
<dbReference type="UniPathway" id="UPA00075">
    <property type="reaction ID" value="UER00335"/>
</dbReference>
<dbReference type="Proteomes" id="UP000008550">
    <property type="component" value="Chromosome"/>
</dbReference>
<dbReference type="GO" id="GO:0005737">
    <property type="term" value="C:cytoplasm"/>
    <property type="evidence" value="ECO:0007669"/>
    <property type="project" value="UniProtKB-SubCell"/>
</dbReference>
<dbReference type="GO" id="GO:0004019">
    <property type="term" value="F:adenylosuccinate synthase activity"/>
    <property type="evidence" value="ECO:0007669"/>
    <property type="project" value="UniProtKB-UniRule"/>
</dbReference>
<dbReference type="GO" id="GO:0005525">
    <property type="term" value="F:GTP binding"/>
    <property type="evidence" value="ECO:0007669"/>
    <property type="project" value="UniProtKB-UniRule"/>
</dbReference>
<dbReference type="GO" id="GO:0000287">
    <property type="term" value="F:magnesium ion binding"/>
    <property type="evidence" value="ECO:0007669"/>
    <property type="project" value="UniProtKB-UniRule"/>
</dbReference>
<dbReference type="GO" id="GO:0044208">
    <property type="term" value="P:'de novo' AMP biosynthetic process"/>
    <property type="evidence" value="ECO:0007669"/>
    <property type="project" value="UniProtKB-UniRule"/>
</dbReference>
<dbReference type="GO" id="GO:0046040">
    <property type="term" value="P:IMP metabolic process"/>
    <property type="evidence" value="ECO:0007669"/>
    <property type="project" value="TreeGrafter"/>
</dbReference>
<dbReference type="CDD" id="cd03108">
    <property type="entry name" value="AdSS"/>
    <property type="match status" value="1"/>
</dbReference>
<dbReference type="FunFam" id="1.10.300.10:FF:000001">
    <property type="entry name" value="Adenylosuccinate synthetase"/>
    <property type="match status" value="1"/>
</dbReference>
<dbReference type="FunFam" id="3.90.170.10:FF:000001">
    <property type="entry name" value="Adenylosuccinate synthetase"/>
    <property type="match status" value="1"/>
</dbReference>
<dbReference type="Gene3D" id="3.40.440.10">
    <property type="entry name" value="Adenylosuccinate Synthetase, subunit A, domain 1"/>
    <property type="match status" value="1"/>
</dbReference>
<dbReference type="Gene3D" id="1.10.300.10">
    <property type="entry name" value="Adenylosuccinate Synthetase, subunit A, domain 2"/>
    <property type="match status" value="1"/>
</dbReference>
<dbReference type="Gene3D" id="3.90.170.10">
    <property type="entry name" value="Adenylosuccinate Synthetase, subunit A, domain 3"/>
    <property type="match status" value="1"/>
</dbReference>
<dbReference type="HAMAP" id="MF_00011">
    <property type="entry name" value="Adenylosucc_synth"/>
    <property type="match status" value="1"/>
</dbReference>
<dbReference type="InterPro" id="IPR018220">
    <property type="entry name" value="Adenylosuccin_syn_GTP-bd"/>
</dbReference>
<dbReference type="InterPro" id="IPR033128">
    <property type="entry name" value="Adenylosuccin_syn_Lys_AS"/>
</dbReference>
<dbReference type="InterPro" id="IPR042109">
    <property type="entry name" value="Adenylosuccinate_synth_dom1"/>
</dbReference>
<dbReference type="InterPro" id="IPR042110">
    <property type="entry name" value="Adenylosuccinate_synth_dom2"/>
</dbReference>
<dbReference type="InterPro" id="IPR042111">
    <property type="entry name" value="Adenylosuccinate_synth_dom3"/>
</dbReference>
<dbReference type="InterPro" id="IPR001114">
    <property type="entry name" value="Adenylosuccinate_synthetase"/>
</dbReference>
<dbReference type="InterPro" id="IPR027417">
    <property type="entry name" value="P-loop_NTPase"/>
</dbReference>
<dbReference type="NCBIfam" id="NF002223">
    <property type="entry name" value="PRK01117.1"/>
    <property type="match status" value="1"/>
</dbReference>
<dbReference type="NCBIfam" id="TIGR00184">
    <property type="entry name" value="purA"/>
    <property type="match status" value="1"/>
</dbReference>
<dbReference type="PANTHER" id="PTHR11846">
    <property type="entry name" value="ADENYLOSUCCINATE SYNTHETASE"/>
    <property type="match status" value="1"/>
</dbReference>
<dbReference type="PANTHER" id="PTHR11846:SF0">
    <property type="entry name" value="ADENYLOSUCCINATE SYNTHETASE"/>
    <property type="match status" value="1"/>
</dbReference>
<dbReference type="Pfam" id="PF00709">
    <property type="entry name" value="Adenylsucc_synt"/>
    <property type="match status" value="1"/>
</dbReference>
<dbReference type="SMART" id="SM00788">
    <property type="entry name" value="Adenylsucc_synt"/>
    <property type="match status" value="1"/>
</dbReference>
<dbReference type="SUPFAM" id="SSF52540">
    <property type="entry name" value="P-loop containing nucleoside triphosphate hydrolases"/>
    <property type="match status" value="1"/>
</dbReference>
<dbReference type="PROSITE" id="PS01266">
    <property type="entry name" value="ADENYLOSUCCIN_SYN_1"/>
    <property type="match status" value="1"/>
</dbReference>
<dbReference type="PROSITE" id="PS00513">
    <property type="entry name" value="ADENYLOSUCCIN_SYN_2"/>
    <property type="match status" value="1"/>
</dbReference>
<comment type="function">
    <text evidence="1">Plays an important role in the de novo pathway of purine nucleotide biosynthesis. Catalyzes the first committed step in the biosynthesis of AMP from IMP.</text>
</comment>
<comment type="catalytic activity">
    <reaction evidence="1">
        <text>IMP + L-aspartate + GTP = N(6)-(1,2-dicarboxyethyl)-AMP + GDP + phosphate + 2 H(+)</text>
        <dbReference type="Rhea" id="RHEA:15753"/>
        <dbReference type="ChEBI" id="CHEBI:15378"/>
        <dbReference type="ChEBI" id="CHEBI:29991"/>
        <dbReference type="ChEBI" id="CHEBI:37565"/>
        <dbReference type="ChEBI" id="CHEBI:43474"/>
        <dbReference type="ChEBI" id="CHEBI:57567"/>
        <dbReference type="ChEBI" id="CHEBI:58053"/>
        <dbReference type="ChEBI" id="CHEBI:58189"/>
        <dbReference type="EC" id="6.3.4.4"/>
    </reaction>
</comment>
<comment type="cofactor">
    <cofactor evidence="1">
        <name>Mg(2+)</name>
        <dbReference type="ChEBI" id="CHEBI:18420"/>
    </cofactor>
    <text evidence="1">Binds 1 Mg(2+) ion per subunit.</text>
</comment>
<comment type="pathway">
    <text evidence="1">Purine metabolism; AMP biosynthesis via de novo pathway; AMP from IMP: step 1/2.</text>
</comment>
<comment type="subunit">
    <text evidence="1">Homodimer.</text>
</comment>
<comment type="subcellular location">
    <subcellularLocation>
        <location evidence="1">Cytoplasm</location>
    </subcellularLocation>
</comment>
<comment type="similarity">
    <text evidence="1">Belongs to the adenylosuccinate synthetase family.</text>
</comment>
<gene>
    <name evidence="1" type="primary">purA</name>
    <name type="ordered locus">Helmi_09640</name>
    <name type="ORF">HM1_0977</name>
</gene>
<name>PURA_HELMI</name>